<sequence length="610" mass="68665">MTDLFDYKEFLKTVTSQPGVYRMYDTAGTVIYVGKAKDLKKRLTSYFRAQVANRKTETLVKNIAQIDVTVTHTETEALLLEHNYIKLYQPRYNVLLRDDKSYPLIFLSADEHPRLAVHRGAKHEKGEYFGPFPNSYAVRETLALLQKLFPVRQCENSVYRNRSRPCLQYQIGRCSGPCVEGLVSEEEYQRQVDYVRLFLSGKDQQVLTQLITRMEEASQQLHFEDAARIRDQIQAVRRVTEQQFVSGDSEDLDVIGVAFDAGLACVHVLFIRLGKVLGSRSYFPKVPAGTELSEVVQTFVGQFYLQGSQGRTLPGEILLDFTLTEKDLLASSLSELAGRKIQIQSRPRGDRARYLKLARTNASTALITRLSQQSTIHQRMKELAKVLKLDEINRMECFDISHTMGEQTVASCVVFDANGPVRSEYRRYNISGITPGDDYAAMAQVLKRRYGKALDDQKIPDVIFIDGGKGQLSQAFDVFASLNVPWDKQKPLLVGVAKGSDRKAGLETLFLASEGEGFSLPPDSPALHLIQHIRDDSHNHAITGHRQRRSKVKNTSALEMIEGVGPKRRQALLKYMGGLQPLFNASVEEIAKVPGISQALAEKIHNALKH</sequence>
<evidence type="ECO:0000255" key="1">
    <source>
        <dbReference type="HAMAP-Rule" id="MF_00203"/>
    </source>
</evidence>
<gene>
    <name evidence="1" type="primary">uvrC</name>
    <name type="ordered locus">YPTB1736</name>
</gene>
<name>UVRC_YERPS</name>
<dbReference type="EMBL" id="BX936398">
    <property type="protein sequence ID" value="CAH20975.1"/>
    <property type="molecule type" value="Genomic_DNA"/>
</dbReference>
<dbReference type="RefSeq" id="WP_024063361.1">
    <property type="nucleotide sequence ID" value="NC_006155.1"/>
</dbReference>
<dbReference type="SMR" id="Q66BN5"/>
<dbReference type="GeneID" id="49786185"/>
<dbReference type="KEGG" id="ypo:BZ17_763"/>
<dbReference type="KEGG" id="yps:YPTB1736"/>
<dbReference type="PATRIC" id="fig|273123.14.peg.808"/>
<dbReference type="Proteomes" id="UP000001011">
    <property type="component" value="Chromosome"/>
</dbReference>
<dbReference type="GO" id="GO:0005737">
    <property type="term" value="C:cytoplasm"/>
    <property type="evidence" value="ECO:0007669"/>
    <property type="project" value="UniProtKB-SubCell"/>
</dbReference>
<dbReference type="GO" id="GO:0009380">
    <property type="term" value="C:excinuclease repair complex"/>
    <property type="evidence" value="ECO:0007669"/>
    <property type="project" value="InterPro"/>
</dbReference>
<dbReference type="GO" id="GO:0003677">
    <property type="term" value="F:DNA binding"/>
    <property type="evidence" value="ECO:0007669"/>
    <property type="project" value="UniProtKB-UniRule"/>
</dbReference>
<dbReference type="GO" id="GO:0009381">
    <property type="term" value="F:excinuclease ABC activity"/>
    <property type="evidence" value="ECO:0007669"/>
    <property type="project" value="UniProtKB-UniRule"/>
</dbReference>
<dbReference type="GO" id="GO:0006289">
    <property type="term" value="P:nucleotide-excision repair"/>
    <property type="evidence" value="ECO:0007669"/>
    <property type="project" value="UniProtKB-UniRule"/>
</dbReference>
<dbReference type="GO" id="GO:0009432">
    <property type="term" value="P:SOS response"/>
    <property type="evidence" value="ECO:0007669"/>
    <property type="project" value="UniProtKB-UniRule"/>
</dbReference>
<dbReference type="CDD" id="cd10434">
    <property type="entry name" value="GIY-YIG_UvrC_Cho"/>
    <property type="match status" value="1"/>
</dbReference>
<dbReference type="FunFam" id="1.10.150.20:FF:000005">
    <property type="entry name" value="UvrABC system protein C"/>
    <property type="match status" value="1"/>
</dbReference>
<dbReference type="FunFam" id="3.30.420.340:FF:000001">
    <property type="entry name" value="UvrABC system protein C"/>
    <property type="match status" value="1"/>
</dbReference>
<dbReference type="FunFam" id="3.40.1440.10:FF:000001">
    <property type="entry name" value="UvrABC system protein C"/>
    <property type="match status" value="1"/>
</dbReference>
<dbReference type="FunFam" id="4.10.860.10:FF:000002">
    <property type="entry name" value="UvrABC system protein C"/>
    <property type="match status" value="1"/>
</dbReference>
<dbReference type="Gene3D" id="1.10.150.20">
    <property type="entry name" value="5' to 3' exonuclease, C-terminal subdomain"/>
    <property type="match status" value="1"/>
</dbReference>
<dbReference type="Gene3D" id="3.40.1440.10">
    <property type="entry name" value="GIY-YIG endonuclease"/>
    <property type="match status" value="1"/>
</dbReference>
<dbReference type="Gene3D" id="4.10.860.10">
    <property type="entry name" value="UVR domain"/>
    <property type="match status" value="1"/>
</dbReference>
<dbReference type="Gene3D" id="3.30.420.340">
    <property type="entry name" value="UvrC, RNAse H endonuclease domain"/>
    <property type="match status" value="1"/>
</dbReference>
<dbReference type="HAMAP" id="MF_00203">
    <property type="entry name" value="UvrC"/>
    <property type="match status" value="1"/>
</dbReference>
<dbReference type="InterPro" id="IPR000305">
    <property type="entry name" value="GIY-YIG_endonuc"/>
</dbReference>
<dbReference type="InterPro" id="IPR035901">
    <property type="entry name" value="GIY-YIG_endonuc_sf"/>
</dbReference>
<dbReference type="InterPro" id="IPR047296">
    <property type="entry name" value="GIY-YIG_UvrC_Cho"/>
</dbReference>
<dbReference type="InterPro" id="IPR003583">
    <property type="entry name" value="Hlx-hairpin-Hlx_DNA-bd_motif"/>
</dbReference>
<dbReference type="InterPro" id="IPR010994">
    <property type="entry name" value="RuvA_2-like"/>
</dbReference>
<dbReference type="InterPro" id="IPR001943">
    <property type="entry name" value="UVR_dom"/>
</dbReference>
<dbReference type="InterPro" id="IPR036876">
    <property type="entry name" value="UVR_dom_sf"/>
</dbReference>
<dbReference type="InterPro" id="IPR050066">
    <property type="entry name" value="UvrABC_protein_C"/>
</dbReference>
<dbReference type="InterPro" id="IPR004791">
    <property type="entry name" value="UvrC"/>
</dbReference>
<dbReference type="InterPro" id="IPR001162">
    <property type="entry name" value="UvrC_RNase_H_dom"/>
</dbReference>
<dbReference type="InterPro" id="IPR038476">
    <property type="entry name" value="UvrC_RNase_H_dom_sf"/>
</dbReference>
<dbReference type="NCBIfam" id="NF001824">
    <property type="entry name" value="PRK00558.1-5"/>
    <property type="match status" value="1"/>
</dbReference>
<dbReference type="NCBIfam" id="TIGR00194">
    <property type="entry name" value="uvrC"/>
    <property type="match status" value="1"/>
</dbReference>
<dbReference type="PANTHER" id="PTHR30562:SF1">
    <property type="entry name" value="UVRABC SYSTEM PROTEIN C"/>
    <property type="match status" value="1"/>
</dbReference>
<dbReference type="PANTHER" id="PTHR30562">
    <property type="entry name" value="UVRC/OXIDOREDUCTASE"/>
    <property type="match status" value="1"/>
</dbReference>
<dbReference type="Pfam" id="PF01541">
    <property type="entry name" value="GIY-YIG"/>
    <property type="match status" value="1"/>
</dbReference>
<dbReference type="Pfam" id="PF14520">
    <property type="entry name" value="HHH_5"/>
    <property type="match status" value="1"/>
</dbReference>
<dbReference type="Pfam" id="PF02151">
    <property type="entry name" value="UVR"/>
    <property type="match status" value="1"/>
</dbReference>
<dbReference type="Pfam" id="PF22920">
    <property type="entry name" value="UvrC_RNaseH"/>
    <property type="match status" value="1"/>
</dbReference>
<dbReference type="Pfam" id="PF08459">
    <property type="entry name" value="UvrC_RNaseH_dom"/>
    <property type="match status" value="1"/>
</dbReference>
<dbReference type="SMART" id="SM00465">
    <property type="entry name" value="GIYc"/>
    <property type="match status" value="1"/>
</dbReference>
<dbReference type="SMART" id="SM00278">
    <property type="entry name" value="HhH1"/>
    <property type="match status" value="2"/>
</dbReference>
<dbReference type="SUPFAM" id="SSF46600">
    <property type="entry name" value="C-terminal UvrC-binding domain of UvrB"/>
    <property type="match status" value="1"/>
</dbReference>
<dbReference type="SUPFAM" id="SSF82771">
    <property type="entry name" value="GIY-YIG endonuclease"/>
    <property type="match status" value="1"/>
</dbReference>
<dbReference type="SUPFAM" id="SSF47781">
    <property type="entry name" value="RuvA domain 2-like"/>
    <property type="match status" value="1"/>
</dbReference>
<dbReference type="PROSITE" id="PS50164">
    <property type="entry name" value="GIY_YIG"/>
    <property type="match status" value="1"/>
</dbReference>
<dbReference type="PROSITE" id="PS50151">
    <property type="entry name" value="UVR"/>
    <property type="match status" value="1"/>
</dbReference>
<dbReference type="PROSITE" id="PS50165">
    <property type="entry name" value="UVRC"/>
    <property type="match status" value="1"/>
</dbReference>
<reference key="1">
    <citation type="journal article" date="2004" name="Proc. Natl. Acad. Sci. U.S.A.">
        <title>Insights into the evolution of Yersinia pestis through whole-genome comparison with Yersinia pseudotuberculosis.</title>
        <authorList>
            <person name="Chain P.S.G."/>
            <person name="Carniel E."/>
            <person name="Larimer F.W."/>
            <person name="Lamerdin J."/>
            <person name="Stoutland P.O."/>
            <person name="Regala W.M."/>
            <person name="Georgescu A.M."/>
            <person name="Vergez L.M."/>
            <person name="Land M.L."/>
            <person name="Motin V.L."/>
            <person name="Brubaker R.R."/>
            <person name="Fowler J."/>
            <person name="Hinnebusch J."/>
            <person name="Marceau M."/>
            <person name="Medigue C."/>
            <person name="Simonet M."/>
            <person name="Chenal-Francisque V."/>
            <person name="Souza B."/>
            <person name="Dacheux D."/>
            <person name="Elliott J.M."/>
            <person name="Derbise A."/>
            <person name="Hauser L.J."/>
            <person name="Garcia E."/>
        </authorList>
    </citation>
    <scope>NUCLEOTIDE SEQUENCE [LARGE SCALE GENOMIC DNA]</scope>
    <source>
        <strain>IP32953</strain>
    </source>
</reference>
<protein>
    <recommendedName>
        <fullName evidence="1">UvrABC system protein C</fullName>
        <shortName evidence="1">Protein UvrC</shortName>
    </recommendedName>
    <alternativeName>
        <fullName evidence="1">Excinuclease ABC subunit C</fullName>
    </alternativeName>
</protein>
<keyword id="KW-0963">Cytoplasm</keyword>
<keyword id="KW-0227">DNA damage</keyword>
<keyword id="KW-0228">DNA excision</keyword>
<keyword id="KW-0234">DNA repair</keyword>
<keyword id="KW-0267">Excision nuclease</keyword>
<keyword id="KW-0742">SOS response</keyword>
<organism>
    <name type="scientific">Yersinia pseudotuberculosis serotype I (strain IP32953)</name>
    <dbReference type="NCBI Taxonomy" id="273123"/>
    <lineage>
        <taxon>Bacteria</taxon>
        <taxon>Pseudomonadati</taxon>
        <taxon>Pseudomonadota</taxon>
        <taxon>Gammaproteobacteria</taxon>
        <taxon>Enterobacterales</taxon>
        <taxon>Yersiniaceae</taxon>
        <taxon>Yersinia</taxon>
    </lineage>
</organism>
<proteinExistence type="inferred from homology"/>
<comment type="function">
    <text evidence="1">The UvrABC repair system catalyzes the recognition and processing of DNA lesions. UvrC both incises the 5' and 3' sides of the lesion. The N-terminal half is responsible for the 3' incision and the C-terminal half is responsible for the 5' incision.</text>
</comment>
<comment type="subunit">
    <text evidence="1">Interacts with UvrB in an incision complex.</text>
</comment>
<comment type="subcellular location">
    <subcellularLocation>
        <location evidence="1">Cytoplasm</location>
    </subcellularLocation>
</comment>
<comment type="similarity">
    <text evidence="1">Belongs to the UvrC family.</text>
</comment>
<accession>Q66BN5</accession>
<feature type="chain" id="PRO_0000227496" description="UvrABC system protein C">
    <location>
        <begin position="1"/>
        <end position="610"/>
    </location>
</feature>
<feature type="domain" description="GIY-YIG" evidence="1">
    <location>
        <begin position="16"/>
        <end position="94"/>
    </location>
</feature>
<feature type="domain" description="UVR" evidence="1">
    <location>
        <begin position="204"/>
        <end position="239"/>
    </location>
</feature>